<dbReference type="EC" id="2.3.1.180" evidence="1"/>
<dbReference type="EMBL" id="CP000911">
    <property type="protein sequence ID" value="ABY37882.1"/>
    <property type="molecule type" value="Genomic_DNA"/>
</dbReference>
<dbReference type="RefSeq" id="WP_006072528.1">
    <property type="nucleotide sequence ID" value="NC_010169.1"/>
</dbReference>
<dbReference type="SMR" id="B0CLA2"/>
<dbReference type="KEGG" id="bmt:BSUIS_A0811"/>
<dbReference type="HOGENOM" id="CLU_039592_3_1_5"/>
<dbReference type="UniPathway" id="UPA00094"/>
<dbReference type="Proteomes" id="UP000008545">
    <property type="component" value="Chromosome I"/>
</dbReference>
<dbReference type="GO" id="GO:0005737">
    <property type="term" value="C:cytoplasm"/>
    <property type="evidence" value="ECO:0007669"/>
    <property type="project" value="UniProtKB-SubCell"/>
</dbReference>
<dbReference type="GO" id="GO:0004315">
    <property type="term" value="F:3-oxoacyl-[acyl-carrier-protein] synthase activity"/>
    <property type="evidence" value="ECO:0007669"/>
    <property type="project" value="InterPro"/>
</dbReference>
<dbReference type="GO" id="GO:0033818">
    <property type="term" value="F:beta-ketoacyl-acyl-carrier-protein synthase III activity"/>
    <property type="evidence" value="ECO:0007669"/>
    <property type="project" value="UniProtKB-UniRule"/>
</dbReference>
<dbReference type="GO" id="GO:0006633">
    <property type="term" value="P:fatty acid biosynthetic process"/>
    <property type="evidence" value="ECO:0007669"/>
    <property type="project" value="UniProtKB-UniRule"/>
</dbReference>
<dbReference type="CDD" id="cd00830">
    <property type="entry name" value="KAS_III"/>
    <property type="match status" value="1"/>
</dbReference>
<dbReference type="FunFam" id="3.40.47.10:FF:000004">
    <property type="entry name" value="3-oxoacyl-[acyl-carrier-protein] synthase 3"/>
    <property type="match status" value="1"/>
</dbReference>
<dbReference type="Gene3D" id="3.40.47.10">
    <property type="match status" value="1"/>
</dbReference>
<dbReference type="HAMAP" id="MF_01815">
    <property type="entry name" value="FabH"/>
    <property type="match status" value="1"/>
</dbReference>
<dbReference type="InterPro" id="IPR013747">
    <property type="entry name" value="ACP_syn_III_C"/>
</dbReference>
<dbReference type="InterPro" id="IPR013751">
    <property type="entry name" value="ACP_syn_III_N"/>
</dbReference>
<dbReference type="InterPro" id="IPR004655">
    <property type="entry name" value="FabH"/>
</dbReference>
<dbReference type="InterPro" id="IPR016039">
    <property type="entry name" value="Thiolase-like"/>
</dbReference>
<dbReference type="NCBIfam" id="TIGR00747">
    <property type="entry name" value="fabH"/>
    <property type="match status" value="1"/>
</dbReference>
<dbReference type="NCBIfam" id="NF006829">
    <property type="entry name" value="PRK09352.1"/>
    <property type="match status" value="1"/>
</dbReference>
<dbReference type="PANTHER" id="PTHR43091">
    <property type="entry name" value="3-OXOACYL-[ACYL-CARRIER-PROTEIN] SYNTHASE"/>
    <property type="match status" value="1"/>
</dbReference>
<dbReference type="PANTHER" id="PTHR43091:SF1">
    <property type="entry name" value="BETA-KETOACYL-[ACYL-CARRIER-PROTEIN] SYNTHASE III, CHLOROPLASTIC"/>
    <property type="match status" value="1"/>
</dbReference>
<dbReference type="Pfam" id="PF08545">
    <property type="entry name" value="ACP_syn_III"/>
    <property type="match status" value="1"/>
</dbReference>
<dbReference type="Pfam" id="PF08541">
    <property type="entry name" value="ACP_syn_III_C"/>
    <property type="match status" value="1"/>
</dbReference>
<dbReference type="SUPFAM" id="SSF53901">
    <property type="entry name" value="Thiolase-like"/>
    <property type="match status" value="1"/>
</dbReference>
<proteinExistence type="inferred from homology"/>
<reference key="1">
    <citation type="submission" date="2007-12" db="EMBL/GenBank/DDBJ databases">
        <title>Brucella suis ATCC 23445 whole genome shotgun sequencing project.</title>
        <authorList>
            <person name="Setubal J.C."/>
            <person name="Bowns C."/>
            <person name="Boyle S."/>
            <person name="Crasta O.R."/>
            <person name="Czar M.J."/>
            <person name="Dharmanolla C."/>
            <person name="Gillespie J.J."/>
            <person name="Kenyon R.W."/>
            <person name="Lu J."/>
            <person name="Mane S."/>
            <person name="Mohapatra S."/>
            <person name="Nagrani S."/>
            <person name="Purkayastha A."/>
            <person name="Rajasimha H.K."/>
            <person name="Shallom J.M."/>
            <person name="Shallom S."/>
            <person name="Shukla M."/>
            <person name="Snyder E.E."/>
            <person name="Sobral B.W."/>
            <person name="Wattam A.R."/>
            <person name="Will R."/>
            <person name="Williams K."/>
            <person name="Yoo H."/>
            <person name="Bruce D."/>
            <person name="Detter C."/>
            <person name="Munk C."/>
            <person name="Brettin T.S."/>
        </authorList>
    </citation>
    <scope>NUCLEOTIDE SEQUENCE [LARGE SCALE GENOMIC DNA]</scope>
    <source>
        <strain>ATCC 23445 / NCTC 10510</strain>
    </source>
</reference>
<name>FABH_BRUSI</name>
<gene>
    <name evidence="1" type="primary">fabH</name>
    <name type="ordered locus">BSUIS_A0811</name>
</gene>
<organism>
    <name type="scientific">Brucella suis (strain ATCC 23445 / NCTC 10510)</name>
    <dbReference type="NCBI Taxonomy" id="470137"/>
    <lineage>
        <taxon>Bacteria</taxon>
        <taxon>Pseudomonadati</taxon>
        <taxon>Pseudomonadota</taxon>
        <taxon>Alphaproteobacteria</taxon>
        <taxon>Hyphomicrobiales</taxon>
        <taxon>Brucellaceae</taxon>
        <taxon>Brucella/Ochrobactrum group</taxon>
        <taxon>Brucella</taxon>
    </lineage>
</organism>
<accession>B0CLA2</accession>
<sequence length="323" mass="34478">MIRSVVRGIGSALPKRVMKNTDFEGIVETSDEWIVQRTGIRERHIAGEGETTVSLGAAAARAAIENAGLQPSDIDLVLLATSTPNNTFPASAVAIQRELGITRGFAFDLQAVCSGFIYAITTADLYIRGGMARRVLVIGAETFSRILDWTDRTTCVLFGDGAGAIVLEAAEGHGLTSDRGILATNLRSDGNHKEKLYVDGGPSTTQTVGHLRMEGREVFKHAVGMITDVIEASFEATGLTAEDIDWFVPHQANKRIIDASAKKLHIAEEKVVITVDRHGNTSAASVPLALATAVADGRIKKGDLVLLEAMGGGFTWGAVLVRW</sequence>
<keyword id="KW-0012">Acyltransferase</keyword>
<keyword id="KW-0963">Cytoplasm</keyword>
<keyword id="KW-0275">Fatty acid biosynthesis</keyword>
<keyword id="KW-0276">Fatty acid metabolism</keyword>
<keyword id="KW-0444">Lipid biosynthesis</keyword>
<keyword id="KW-0443">Lipid metabolism</keyword>
<keyword id="KW-0511">Multifunctional enzyme</keyword>
<keyword id="KW-0808">Transferase</keyword>
<feature type="chain" id="PRO_1000187852" description="Beta-ketoacyl-[acyl-carrier-protein] synthase III">
    <location>
        <begin position="1"/>
        <end position="323"/>
    </location>
</feature>
<feature type="region of interest" description="ACP-binding" evidence="1">
    <location>
        <begin position="251"/>
        <end position="255"/>
    </location>
</feature>
<feature type="active site" evidence="1">
    <location>
        <position position="113"/>
    </location>
</feature>
<feature type="active site" evidence="1">
    <location>
        <position position="250"/>
    </location>
</feature>
<feature type="active site" evidence="1">
    <location>
        <position position="280"/>
    </location>
</feature>
<protein>
    <recommendedName>
        <fullName evidence="1">Beta-ketoacyl-[acyl-carrier-protein] synthase III</fullName>
        <shortName evidence="1">Beta-ketoacyl-ACP synthase III</shortName>
        <shortName evidence="1">KAS III</shortName>
        <ecNumber evidence="1">2.3.1.180</ecNumber>
    </recommendedName>
    <alternativeName>
        <fullName evidence="1">3-oxoacyl-[acyl-carrier-protein] synthase 3</fullName>
    </alternativeName>
    <alternativeName>
        <fullName evidence="1">3-oxoacyl-[acyl-carrier-protein] synthase III</fullName>
    </alternativeName>
</protein>
<comment type="function">
    <text evidence="1">Catalyzes the condensation reaction of fatty acid synthesis by the addition to an acyl acceptor of two carbons from malonyl-ACP. Catalyzes the first condensation reaction which initiates fatty acid synthesis and may therefore play a role in governing the total rate of fatty acid production. Possesses both acetoacetyl-ACP synthase and acetyl transacylase activities. Its substrate specificity determines the biosynthesis of branched-chain and/or straight-chain of fatty acids.</text>
</comment>
<comment type="catalytic activity">
    <reaction evidence="1">
        <text>malonyl-[ACP] + acetyl-CoA + H(+) = 3-oxobutanoyl-[ACP] + CO2 + CoA</text>
        <dbReference type="Rhea" id="RHEA:12080"/>
        <dbReference type="Rhea" id="RHEA-COMP:9623"/>
        <dbReference type="Rhea" id="RHEA-COMP:9625"/>
        <dbReference type="ChEBI" id="CHEBI:15378"/>
        <dbReference type="ChEBI" id="CHEBI:16526"/>
        <dbReference type="ChEBI" id="CHEBI:57287"/>
        <dbReference type="ChEBI" id="CHEBI:57288"/>
        <dbReference type="ChEBI" id="CHEBI:78449"/>
        <dbReference type="ChEBI" id="CHEBI:78450"/>
        <dbReference type="EC" id="2.3.1.180"/>
    </reaction>
</comment>
<comment type="pathway">
    <text evidence="1">Lipid metabolism; fatty acid biosynthesis.</text>
</comment>
<comment type="subunit">
    <text evidence="1">Homodimer.</text>
</comment>
<comment type="subcellular location">
    <subcellularLocation>
        <location evidence="1">Cytoplasm</location>
    </subcellularLocation>
</comment>
<comment type="domain">
    <text evidence="1">The last Arg residue of the ACP-binding site is essential for the weak association between ACP/AcpP and FabH.</text>
</comment>
<comment type="similarity">
    <text evidence="1">Belongs to the thiolase-like superfamily. FabH family.</text>
</comment>
<evidence type="ECO:0000255" key="1">
    <source>
        <dbReference type="HAMAP-Rule" id="MF_01815"/>
    </source>
</evidence>